<feature type="initiator methionine" description="Removed" evidence="8">
    <location>
        <position position="1"/>
    </location>
</feature>
<feature type="chain" id="PRO_0000086053" description="cAMP-dependent protein kinase catalytic subunit alpha">
    <location>
        <begin position="2"/>
        <end position="351"/>
    </location>
</feature>
<feature type="domain" description="Protein kinase" evidence="4">
    <location>
        <begin position="44"/>
        <end position="298"/>
    </location>
</feature>
<feature type="domain" description="AGC-kinase C-terminal" evidence="5">
    <location>
        <begin position="299"/>
        <end position="351"/>
    </location>
</feature>
<feature type="active site" description="Proton acceptor">
    <location>
        <position position="167"/>
    </location>
</feature>
<feature type="binding site">
    <location>
        <begin position="50"/>
        <end position="58"/>
    </location>
    <ligand>
        <name>ATP</name>
        <dbReference type="ChEBI" id="CHEBI:30616"/>
    </ligand>
</feature>
<feature type="binding site">
    <location>
        <position position="73"/>
    </location>
    <ligand>
        <name>ATP</name>
        <dbReference type="ChEBI" id="CHEBI:30616"/>
    </ligand>
</feature>
<feature type="binding site">
    <location>
        <begin position="122"/>
        <end position="128"/>
    </location>
    <ligand>
        <name>ATP</name>
        <dbReference type="ChEBI" id="CHEBI:30616"/>
    </ligand>
</feature>
<feature type="binding site">
    <location>
        <begin position="169"/>
        <end position="172"/>
    </location>
    <ligand>
        <name>ATP</name>
        <dbReference type="ChEBI" id="CHEBI:30616"/>
    </ligand>
</feature>
<feature type="modified residue" description="Deamidated asparagine; partial" evidence="8">
    <location>
        <position position="3"/>
    </location>
</feature>
<feature type="modified residue" description="Phosphoserine; by autocatalysis" evidence="8 20">
    <location>
        <position position="11"/>
    </location>
</feature>
<feature type="modified residue" description="Phosphothreonine" evidence="2">
    <location>
        <position position="49"/>
    </location>
</feature>
<feature type="modified residue" description="Phosphoserine" evidence="17 24">
    <location>
        <position position="140"/>
    </location>
</feature>
<feature type="modified residue" description="Phosphothreonine" evidence="2">
    <location>
        <position position="196"/>
    </location>
</feature>
<feature type="modified residue" description="Phosphothreonine; by PDPK1" evidence="17 20 21">
    <location>
        <position position="198"/>
    </location>
</feature>
<feature type="modified residue" description="Phosphotyrosine" evidence="16">
    <location>
        <position position="331"/>
    </location>
</feature>
<feature type="modified residue" description="Phosphoserine" evidence="24">
    <location>
        <position position="339"/>
    </location>
</feature>
<feature type="lipid moiety-binding region" description="N-myristoyl glycine" evidence="8">
    <location>
        <position position="2"/>
    </location>
</feature>
<feature type="splice variant" id="VSP_004760" description="In isoform 2." evidence="22">
    <original>MGNAAAAKKGSEQES</original>
    <variation>MASSSND</variation>
    <location>
        <begin position="1"/>
        <end position="15"/>
    </location>
</feature>
<feature type="mutagenesis site" description="Reduced interaction with SMO." evidence="19">
    <original>K</original>
    <variation>H</variation>
    <location>
        <position position="73"/>
    </location>
</feature>
<feature type="mutagenesis site" description="Does not affect interaction with SMO; when associated with R-197." evidence="19">
    <original>H</original>
    <variation>Q</variation>
    <location>
        <position position="88"/>
    </location>
</feature>
<feature type="mutagenesis site" description="Does not affect interaction with SMO; when associated with Q-88." evidence="19">
    <original>W</original>
    <variation>R</variation>
    <location>
        <position position="197"/>
    </location>
</feature>
<feature type="mutagenesis site" description="No phosphorylation by PDPK1.">
    <original>T</original>
    <variation>D</variation>
    <location>
        <position position="198"/>
    </location>
</feature>
<feature type="mutagenesis site" description="Reduced interaction with SMO." evidence="19">
    <original>L</original>
    <variation>R</variation>
    <location>
        <position position="206"/>
    </location>
</feature>
<feature type="mutagenesis site" description="Impaired inhibition by the R-subunit." evidence="12">
    <original>K</original>
    <variation>P</variation>
    <location>
        <position position="286"/>
    </location>
</feature>
<feature type="mutagenesis site" description="Reduced catalytic activity and impaired inhibition by the R-subunit." evidence="12">
    <original>F</original>
    <variation>A</variation>
    <location>
        <position position="328"/>
    </location>
</feature>
<feature type="sequence conflict" description="In Ref. 2; AAA39936." evidence="23" ref="2">
    <original>T</original>
    <variation>D</variation>
    <location>
        <position position="33"/>
    </location>
</feature>
<feature type="sequence conflict" description="In Ref. 2; AAA39936." evidence="23" ref="2">
    <original>N</original>
    <variation>D</variation>
    <location>
        <position position="287"/>
    </location>
</feature>
<feature type="helix" evidence="29">
    <location>
        <begin position="3"/>
        <end position="7"/>
    </location>
</feature>
<feature type="turn" evidence="29">
    <location>
        <begin position="9"/>
        <end position="12"/>
    </location>
</feature>
<feature type="helix" evidence="26">
    <location>
        <begin position="16"/>
        <end position="32"/>
    </location>
</feature>
<feature type="helix" evidence="26">
    <location>
        <begin position="41"/>
        <end position="43"/>
    </location>
</feature>
<feature type="strand" evidence="26">
    <location>
        <begin position="44"/>
        <end position="52"/>
    </location>
</feature>
<feature type="strand" evidence="26">
    <location>
        <begin position="57"/>
        <end position="63"/>
    </location>
</feature>
<feature type="turn" evidence="26">
    <location>
        <begin position="64"/>
        <end position="66"/>
    </location>
</feature>
<feature type="strand" evidence="26">
    <location>
        <begin position="69"/>
        <end position="76"/>
    </location>
</feature>
<feature type="helix" evidence="26">
    <location>
        <begin position="77"/>
        <end position="82"/>
    </location>
</feature>
<feature type="helix" evidence="26">
    <location>
        <begin position="86"/>
        <end position="96"/>
    </location>
</feature>
<feature type="strand" evidence="26">
    <location>
        <begin position="107"/>
        <end position="112"/>
    </location>
</feature>
<feature type="strand" evidence="26">
    <location>
        <begin position="114"/>
        <end position="122"/>
    </location>
</feature>
<feature type="helix" evidence="26">
    <location>
        <begin position="129"/>
        <end position="136"/>
    </location>
</feature>
<feature type="helix" evidence="26">
    <location>
        <begin position="141"/>
        <end position="160"/>
    </location>
</feature>
<feature type="strand" evidence="25">
    <location>
        <begin position="162"/>
        <end position="164"/>
    </location>
</feature>
<feature type="helix" evidence="26">
    <location>
        <begin position="170"/>
        <end position="172"/>
    </location>
</feature>
<feature type="strand" evidence="26">
    <location>
        <begin position="173"/>
        <end position="175"/>
    </location>
</feature>
<feature type="strand" evidence="26">
    <location>
        <begin position="181"/>
        <end position="183"/>
    </location>
</feature>
<feature type="helix" evidence="27">
    <location>
        <begin position="186"/>
        <end position="188"/>
    </location>
</feature>
<feature type="strand" evidence="31">
    <location>
        <begin position="199"/>
        <end position="201"/>
    </location>
</feature>
<feature type="helix" evidence="26">
    <location>
        <begin position="203"/>
        <end position="205"/>
    </location>
</feature>
<feature type="helix" evidence="26">
    <location>
        <begin position="208"/>
        <end position="211"/>
    </location>
</feature>
<feature type="helix" evidence="26">
    <location>
        <begin position="219"/>
        <end position="234"/>
    </location>
</feature>
<feature type="helix" evidence="26">
    <location>
        <begin position="244"/>
        <end position="253"/>
    </location>
</feature>
<feature type="strand" evidence="32">
    <location>
        <begin position="260"/>
        <end position="262"/>
    </location>
</feature>
<feature type="helix" evidence="26">
    <location>
        <begin position="264"/>
        <end position="273"/>
    </location>
</feature>
<feature type="turn" evidence="26">
    <location>
        <begin position="278"/>
        <end position="280"/>
    </location>
</feature>
<feature type="turn" evidence="30">
    <location>
        <begin position="282"/>
        <end position="284"/>
    </location>
</feature>
<feature type="turn" evidence="26">
    <location>
        <begin position="286"/>
        <end position="289"/>
    </location>
</feature>
<feature type="helix" evidence="26">
    <location>
        <begin position="290"/>
        <end position="293"/>
    </location>
</feature>
<feature type="helix" evidence="26">
    <location>
        <begin position="296"/>
        <end position="298"/>
    </location>
</feature>
<feature type="helix" evidence="26">
    <location>
        <begin position="303"/>
        <end position="307"/>
    </location>
</feature>
<feature type="strand" evidence="28">
    <location>
        <begin position="321"/>
        <end position="326"/>
    </location>
</feature>
<feature type="turn" evidence="26">
    <location>
        <begin position="345"/>
        <end position="350"/>
    </location>
</feature>
<dbReference type="EC" id="2.7.11.11" evidence="6 13"/>
<dbReference type="EMBL" id="M19960">
    <property type="protein sequence ID" value="AAA39937.1"/>
    <property type="molecule type" value="Genomic_DNA"/>
</dbReference>
<dbReference type="EMBL" id="M18240">
    <property type="protein sequence ID" value="AAA39937.1"/>
    <property type="status" value="JOINED"/>
    <property type="molecule type" value="Genomic_DNA"/>
</dbReference>
<dbReference type="EMBL" id="M18241">
    <property type="protein sequence ID" value="AAA39937.1"/>
    <property type="status" value="JOINED"/>
    <property type="molecule type" value="Genomic_DNA"/>
</dbReference>
<dbReference type="EMBL" id="M19953">
    <property type="protein sequence ID" value="AAA39937.1"/>
    <property type="status" value="JOINED"/>
    <property type="molecule type" value="Genomic_DNA"/>
</dbReference>
<dbReference type="EMBL" id="M19954">
    <property type="protein sequence ID" value="AAA39937.1"/>
    <property type="status" value="JOINED"/>
    <property type="molecule type" value="Genomic_DNA"/>
</dbReference>
<dbReference type="EMBL" id="M19955">
    <property type="protein sequence ID" value="AAA39937.1"/>
    <property type="status" value="JOINED"/>
    <property type="molecule type" value="Genomic_DNA"/>
</dbReference>
<dbReference type="EMBL" id="M19956">
    <property type="protein sequence ID" value="AAA39937.1"/>
    <property type="status" value="JOINED"/>
    <property type="molecule type" value="Genomic_DNA"/>
</dbReference>
<dbReference type="EMBL" id="M19957">
    <property type="protein sequence ID" value="AAA39937.1"/>
    <property type="status" value="JOINED"/>
    <property type="molecule type" value="Genomic_DNA"/>
</dbReference>
<dbReference type="EMBL" id="M19958">
    <property type="protein sequence ID" value="AAA39937.1"/>
    <property type="status" value="JOINED"/>
    <property type="molecule type" value="Genomic_DNA"/>
</dbReference>
<dbReference type="EMBL" id="M19959">
    <property type="protein sequence ID" value="AAA39937.1"/>
    <property type="status" value="JOINED"/>
    <property type="molecule type" value="Genomic_DNA"/>
</dbReference>
<dbReference type="EMBL" id="M12303">
    <property type="protein sequence ID" value="AAA39936.1"/>
    <property type="molecule type" value="mRNA"/>
</dbReference>
<dbReference type="EMBL" id="BC003238">
    <property type="protein sequence ID" value="AAH03238.1"/>
    <property type="molecule type" value="mRNA"/>
</dbReference>
<dbReference type="EMBL" id="BC054834">
    <property type="protein sequence ID" value="AAH54834.1"/>
    <property type="molecule type" value="mRNA"/>
</dbReference>
<dbReference type="EMBL" id="AF239743">
    <property type="protein sequence ID" value="AAF76425.1"/>
    <property type="molecule type" value="mRNA"/>
</dbReference>
<dbReference type="CCDS" id="CCDS22463.1">
    <molecule id="P05132-1"/>
</dbReference>
<dbReference type="CCDS" id="CCDS85574.1">
    <molecule id="P05132-2"/>
</dbReference>
<dbReference type="PIR" id="A28619">
    <property type="entry name" value="OKMSCA"/>
</dbReference>
<dbReference type="RefSeq" id="NP_001264827.1">
    <molecule id="P05132-2"/>
    <property type="nucleotide sequence ID" value="NM_001277898.1"/>
</dbReference>
<dbReference type="RefSeq" id="NP_032880.1">
    <molecule id="P05132-1"/>
    <property type="nucleotide sequence ID" value="NM_008854.5"/>
</dbReference>
<dbReference type="PDB" id="1APM">
    <property type="method" value="X-ray"/>
    <property type="resolution" value="2.00 A"/>
    <property type="chains" value="E=2-351"/>
</dbReference>
<dbReference type="PDB" id="1ATP">
    <property type="method" value="X-ray"/>
    <property type="resolution" value="2.20 A"/>
    <property type="chains" value="E=2-351"/>
</dbReference>
<dbReference type="PDB" id="1BKX">
    <property type="method" value="X-ray"/>
    <property type="resolution" value="2.60 A"/>
    <property type="chains" value="A=2-351"/>
</dbReference>
<dbReference type="PDB" id="1BX6">
    <property type="method" value="X-ray"/>
    <property type="resolution" value="2.10 A"/>
    <property type="chains" value="A=2-351"/>
</dbReference>
<dbReference type="PDB" id="1FMO">
    <property type="method" value="X-ray"/>
    <property type="resolution" value="2.20 A"/>
    <property type="chains" value="E=2-351"/>
</dbReference>
<dbReference type="PDB" id="1J3H">
    <property type="method" value="X-ray"/>
    <property type="resolution" value="2.90 A"/>
    <property type="chains" value="A/B=2-351"/>
</dbReference>
<dbReference type="PDB" id="1JBP">
    <property type="method" value="X-ray"/>
    <property type="resolution" value="2.20 A"/>
    <property type="chains" value="E=2-351"/>
</dbReference>
<dbReference type="PDB" id="1JLU">
    <property type="method" value="X-ray"/>
    <property type="resolution" value="2.25 A"/>
    <property type="chains" value="E=2-351"/>
</dbReference>
<dbReference type="PDB" id="1L3R">
    <property type="method" value="X-ray"/>
    <property type="resolution" value="2.00 A"/>
    <property type="chains" value="E=2-351"/>
</dbReference>
<dbReference type="PDB" id="1RDQ">
    <property type="method" value="X-ray"/>
    <property type="resolution" value="1.26 A"/>
    <property type="chains" value="E=2-351"/>
</dbReference>
<dbReference type="PDB" id="1RE8">
    <property type="method" value="X-ray"/>
    <property type="resolution" value="2.10 A"/>
    <property type="chains" value="A=2-351"/>
</dbReference>
<dbReference type="PDB" id="1REJ">
    <property type="method" value="X-ray"/>
    <property type="resolution" value="2.20 A"/>
    <property type="chains" value="A=2-351"/>
</dbReference>
<dbReference type="PDB" id="1REK">
    <property type="method" value="X-ray"/>
    <property type="resolution" value="2.30 A"/>
    <property type="chains" value="A=2-351"/>
</dbReference>
<dbReference type="PDB" id="1SYK">
    <property type="method" value="X-ray"/>
    <property type="resolution" value="2.80 A"/>
    <property type="chains" value="A/B=2-351"/>
</dbReference>
<dbReference type="PDB" id="2CPK">
    <property type="method" value="X-ray"/>
    <property type="resolution" value="2.70 A"/>
    <property type="chains" value="E=2-351"/>
</dbReference>
<dbReference type="PDB" id="2ERZ">
    <property type="method" value="X-ray"/>
    <property type="resolution" value="2.20 A"/>
    <property type="chains" value="E=1-351"/>
</dbReference>
<dbReference type="PDB" id="2QCS">
    <property type="method" value="X-ray"/>
    <property type="resolution" value="2.20 A"/>
    <property type="chains" value="A=2-351"/>
</dbReference>
<dbReference type="PDB" id="2QUR">
    <property type="method" value="X-ray"/>
    <property type="resolution" value="2.50 A"/>
    <property type="chains" value="A=2-351"/>
</dbReference>
<dbReference type="PDB" id="2QVS">
    <property type="method" value="X-ray"/>
    <property type="resolution" value="2.50 A"/>
    <property type="chains" value="E=2-351"/>
</dbReference>
<dbReference type="PDB" id="3FHI">
    <property type="method" value="X-ray"/>
    <property type="resolution" value="2.00 A"/>
    <property type="chains" value="A=2-351"/>
</dbReference>
<dbReference type="PDB" id="3FJQ">
    <property type="method" value="X-ray"/>
    <property type="resolution" value="1.60 A"/>
    <property type="chains" value="E=2-351"/>
</dbReference>
<dbReference type="PDB" id="3IDB">
    <property type="method" value="X-ray"/>
    <property type="resolution" value="1.62 A"/>
    <property type="chains" value="A=2-351"/>
</dbReference>
<dbReference type="PDB" id="3IDC">
    <property type="method" value="X-ray"/>
    <property type="resolution" value="2.70 A"/>
    <property type="chains" value="A=2-351"/>
</dbReference>
<dbReference type="PDB" id="3J4Q">
    <property type="method" value="EM"/>
    <property type="resolution" value="35.00 A"/>
    <property type="chains" value="D/E=1-351"/>
</dbReference>
<dbReference type="PDB" id="3J4R">
    <property type="method" value="EM"/>
    <property type="resolution" value="35.00 A"/>
    <property type="chains" value="D/E=1-351"/>
</dbReference>
<dbReference type="PDB" id="3O7L">
    <property type="method" value="X-ray"/>
    <property type="resolution" value="2.80 A"/>
    <property type="chains" value="B/D=2-351"/>
</dbReference>
<dbReference type="PDB" id="3OW3">
    <property type="method" value="X-ray"/>
    <property type="resolution" value="1.90 A"/>
    <property type="chains" value="A=2-351"/>
</dbReference>
<dbReference type="PDB" id="3PVB">
    <property type="method" value="X-ray"/>
    <property type="resolution" value="3.30 A"/>
    <property type="chains" value="A=7-351"/>
</dbReference>
<dbReference type="PDB" id="3QAL">
    <property type="method" value="X-ray"/>
    <property type="resolution" value="1.70 A"/>
    <property type="chains" value="E=2-351"/>
</dbReference>
<dbReference type="PDB" id="3QAM">
    <property type="method" value="X-ray"/>
    <property type="resolution" value="1.92 A"/>
    <property type="chains" value="E=2-351"/>
</dbReference>
<dbReference type="PDB" id="3TNP">
    <property type="method" value="X-ray"/>
    <property type="resolution" value="2.30 A"/>
    <property type="chains" value="C/F=2-351"/>
</dbReference>
<dbReference type="PDB" id="3TNQ">
    <property type="method" value="X-ray"/>
    <property type="resolution" value="3.10 A"/>
    <property type="chains" value="B=2-351"/>
</dbReference>
<dbReference type="PDB" id="3X2U">
    <property type="method" value="X-ray"/>
    <property type="resolution" value="2.40 A"/>
    <property type="chains" value="A=1-351"/>
</dbReference>
<dbReference type="PDB" id="3X2V">
    <property type="method" value="X-ray"/>
    <property type="resolution" value="1.77 A"/>
    <property type="chains" value="A=1-351"/>
</dbReference>
<dbReference type="PDB" id="3X2W">
    <property type="method" value="X-ray"/>
    <property type="resolution" value="1.70 A"/>
    <property type="chains" value="A=1-351"/>
</dbReference>
<dbReference type="PDB" id="4DFX">
    <property type="method" value="X-ray"/>
    <property type="resolution" value="1.35 A"/>
    <property type="chains" value="E=2-351"/>
</dbReference>
<dbReference type="PDB" id="4DFY">
    <property type="method" value="X-ray"/>
    <property type="resolution" value="3.00 A"/>
    <property type="chains" value="A/E=1-351"/>
</dbReference>
<dbReference type="PDB" id="4DFZ">
    <property type="method" value="X-ray"/>
    <property type="resolution" value="2.00 A"/>
    <property type="chains" value="E=2-351"/>
</dbReference>
<dbReference type="PDB" id="4DG0">
    <property type="method" value="X-ray"/>
    <property type="resolution" value="2.00 A"/>
    <property type="chains" value="E=2-351"/>
</dbReference>
<dbReference type="PDB" id="4DG2">
    <property type="method" value="X-ray"/>
    <property type="resolution" value="2.00 A"/>
    <property type="chains" value="E=2-351"/>
</dbReference>
<dbReference type="PDB" id="4DG3">
    <property type="method" value="X-ray"/>
    <property type="resolution" value="1.80 A"/>
    <property type="chains" value="E=1-351"/>
</dbReference>
<dbReference type="PDB" id="4DH1">
    <property type="method" value="X-ray"/>
    <property type="resolution" value="2.00 A"/>
    <property type="chains" value="A=16-351"/>
</dbReference>
<dbReference type="PDB" id="4DH3">
    <property type="method" value="X-ray"/>
    <property type="resolution" value="2.20 A"/>
    <property type="chains" value="A=2-351"/>
</dbReference>
<dbReference type="PDB" id="4DH5">
    <property type="method" value="X-ray"/>
    <property type="resolution" value="2.20 A"/>
    <property type="chains" value="A=2-351"/>
</dbReference>
<dbReference type="PDB" id="4DH7">
    <property type="method" value="X-ray"/>
    <property type="resolution" value="1.80 A"/>
    <property type="chains" value="A=2-351"/>
</dbReference>
<dbReference type="PDB" id="4DH8">
    <property type="method" value="X-ray"/>
    <property type="resolution" value="2.30 A"/>
    <property type="chains" value="A=2-351"/>
</dbReference>
<dbReference type="PDB" id="4DIN">
    <property type="method" value="X-ray"/>
    <property type="resolution" value="3.70 A"/>
    <property type="chains" value="A=2-351"/>
</dbReference>
<dbReference type="PDB" id="4HPT">
    <property type="method" value="X-ray"/>
    <property type="resolution" value="2.15 A"/>
    <property type="chains" value="E=2-351"/>
</dbReference>
<dbReference type="PDB" id="4HPU">
    <property type="method" value="X-ray"/>
    <property type="resolution" value="1.55 A"/>
    <property type="chains" value="E=2-351"/>
</dbReference>
<dbReference type="PDB" id="4IAC">
    <property type="method" value="X-ray"/>
    <property type="resolution" value="2.15 A"/>
    <property type="chains" value="A=2-351"/>
</dbReference>
<dbReference type="PDB" id="4IAD">
    <property type="method" value="X-ray"/>
    <property type="resolution" value="1.90 A"/>
    <property type="chains" value="A=2-351"/>
</dbReference>
<dbReference type="PDB" id="4IAF">
    <property type="method" value="X-ray"/>
    <property type="resolution" value="2.20 A"/>
    <property type="chains" value="A=2-351"/>
</dbReference>
<dbReference type="PDB" id="4IAI">
    <property type="method" value="X-ray"/>
    <property type="resolution" value="1.55 A"/>
    <property type="chains" value="A=2-351"/>
</dbReference>
<dbReference type="PDB" id="4IAK">
    <property type="method" value="X-ray"/>
    <property type="resolution" value="1.60 A"/>
    <property type="chains" value="A=2-351"/>
</dbReference>
<dbReference type="PDB" id="4IAY">
    <property type="method" value="X-ray"/>
    <property type="resolution" value="2.00 A"/>
    <property type="chains" value="A=2-351"/>
</dbReference>
<dbReference type="PDB" id="4IAZ">
    <property type="method" value="X-ray"/>
    <property type="resolution" value="1.85 A"/>
    <property type="chains" value="A=2-351"/>
</dbReference>
<dbReference type="PDB" id="4IB0">
    <property type="method" value="X-ray"/>
    <property type="resolution" value="1.87 A"/>
    <property type="chains" value="A=2-351"/>
</dbReference>
<dbReference type="PDB" id="4IB1">
    <property type="method" value="X-ray"/>
    <property type="resolution" value="1.63 A"/>
    <property type="chains" value="A=2-351"/>
</dbReference>
<dbReference type="PDB" id="4IB3">
    <property type="method" value="X-ray"/>
    <property type="resolution" value="2.20 A"/>
    <property type="chains" value="A=2-351"/>
</dbReference>
<dbReference type="PDB" id="4NTS">
    <property type="method" value="X-ray"/>
    <property type="resolution" value="2.90 A"/>
    <property type="chains" value="A/B=2-351"/>
</dbReference>
<dbReference type="PDB" id="4NTT">
    <property type="method" value="X-ray"/>
    <property type="resolution" value="3.50 A"/>
    <property type="chains" value="A/B=2-351"/>
</dbReference>
<dbReference type="PDB" id="4O21">
    <property type="method" value="X-ray"/>
    <property type="resolution" value="1.95 A"/>
    <property type="chains" value="A=16-351"/>
</dbReference>
<dbReference type="PDB" id="4O22">
    <property type="method" value="X-ray"/>
    <property type="resolution" value="1.70 A"/>
    <property type="chains" value="A=16-351"/>
</dbReference>
<dbReference type="PDB" id="4WBB">
    <property type="method" value="X-ray"/>
    <property type="resolution" value="2.80 A"/>
    <property type="chains" value="B=2-351"/>
</dbReference>
<dbReference type="PDB" id="4X6Q">
    <property type="method" value="X-ray"/>
    <property type="resolution" value="2.52 A"/>
    <property type="chains" value="C=2-351"/>
</dbReference>
<dbReference type="PDB" id="4X6R">
    <property type="method" value="X-ray"/>
    <property type="resolution" value="2.40 A"/>
    <property type="chains" value="A=2-351"/>
</dbReference>
<dbReference type="PDB" id="4XW4">
    <property type="method" value="X-ray"/>
    <property type="resolution" value="1.82 A"/>
    <property type="chains" value="A=15-351"/>
</dbReference>
<dbReference type="PDB" id="4XW5">
    <property type="method" value="X-ray"/>
    <property type="resolution" value="1.95 A"/>
    <property type="chains" value="A=15-351"/>
</dbReference>
<dbReference type="PDB" id="4XW6">
    <property type="method" value="X-ray"/>
    <property type="resolution" value="1.90 A"/>
    <property type="chains" value="A=15-351"/>
</dbReference>
<dbReference type="PDB" id="5JR7">
    <property type="method" value="X-ray"/>
    <property type="resolution" value="3.56 A"/>
    <property type="chains" value="A/C=2-351"/>
</dbReference>
<dbReference type="PDB" id="5X3F">
    <property type="method" value="X-ray"/>
    <property type="resolution" value="3.38 A"/>
    <property type="chains" value="B=5-351"/>
</dbReference>
<dbReference type="PDB" id="6E21">
    <property type="method" value="Other"/>
    <property type="resolution" value="2.00 A"/>
    <property type="chains" value="A=2-351"/>
</dbReference>
<dbReference type="PDB" id="6MM5">
    <property type="method" value="X-ray"/>
    <property type="resolution" value="1.95 A"/>
    <property type="chains" value="E=16-351"/>
</dbReference>
<dbReference type="PDB" id="6MM6">
    <property type="method" value="X-ray"/>
    <property type="resolution" value="2.39 A"/>
    <property type="chains" value="C/E=16-351"/>
</dbReference>
<dbReference type="PDB" id="6MM7">
    <property type="method" value="X-ray"/>
    <property type="resolution" value="1.85 A"/>
    <property type="chains" value="A/D=16-351"/>
</dbReference>
<dbReference type="PDB" id="6MM8">
    <property type="method" value="X-ray"/>
    <property type="resolution" value="1.85 A"/>
    <property type="chains" value="C=16-351"/>
</dbReference>
<dbReference type="PDB" id="7E0Z">
    <property type="method" value="X-ray"/>
    <property type="resolution" value="2.16 A"/>
    <property type="chains" value="A=1-351"/>
</dbReference>
<dbReference type="PDB" id="7E11">
    <property type="method" value="X-ray"/>
    <property type="resolution" value="3.43 A"/>
    <property type="chains" value="A=14-351"/>
</dbReference>
<dbReference type="PDB" id="7E12">
    <property type="method" value="X-ray"/>
    <property type="resolution" value="2.80 A"/>
    <property type="chains" value="A=1-351"/>
</dbReference>
<dbReference type="PDB" id="7UJX">
    <property type="method" value="X-ray"/>
    <property type="resolution" value="2.40 A"/>
    <property type="chains" value="E=2-351"/>
</dbReference>
<dbReference type="PDB" id="7V0G">
    <property type="method" value="X-ray"/>
    <property type="resolution" value="1.63 A"/>
    <property type="chains" value="E=2-351"/>
</dbReference>
<dbReference type="PDB" id="8UKN">
    <property type="method" value="X-ray"/>
    <property type="resolution" value="2.75 A"/>
    <property type="chains" value="C/D/F/H=16-351"/>
</dbReference>
<dbReference type="PDB" id="8UKO">
    <property type="method" value="X-ray"/>
    <property type="resolution" value="2.89 A"/>
    <property type="chains" value="E=16-351"/>
</dbReference>
<dbReference type="PDB" id="8UKP">
    <property type="method" value="X-ray"/>
    <property type="resolution" value="2.85 A"/>
    <property type="chains" value="E=16-351"/>
</dbReference>
<dbReference type="PDBsum" id="1APM"/>
<dbReference type="PDBsum" id="1ATP"/>
<dbReference type="PDBsum" id="1BKX"/>
<dbReference type="PDBsum" id="1BX6"/>
<dbReference type="PDBsum" id="1FMO"/>
<dbReference type="PDBsum" id="1J3H"/>
<dbReference type="PDBsum" id="1JBP"/>
<dbReference type="PDBsum" id="1JLU"/>
<dbReference type="PDBsum" id="1L3R"/>
<dbReference type="PDBsum" id="1RDQ"/>
<dbReference type="PDBsum" id="1RE8"/>
<dbReference type="PDBsum" id="1REJ"/>
<dbReference type="PDBsum" id="1REK"/>
<dbReference type="PDBsum" id="1SYK"/>
<dbReference type="PDBsum" id="2CPK"/>
<dbReference type="PDBsum" id="2ERZ"/>
<dbReference type="PDBsum" id="2QCS"/>
<dbReference type="PDBsum" id="2QUR"/>
<dbReference type="PDBsum" id="2QVS"/>
<dbReference type="PDBsum" id="3FHI"/>
<dbReference type="PDBsum" id="3FJQ"/>
<dbReference type="PDBsum" id="3IDB"/>
<dbReference type="PDBsum" id="3IDC"/>
<dbReference type="PDBsum" id="3J4Q"/>
<dbReference type="PDBsum" id="3J4R"/>
<dbReference type="PDBsum" id="3O7L"/>
<dbReference type="PDBsum" id="3OW3"/>
<dbReference type="PDBsum" id="3PVB"/>
<dbReference type="PDBsum" id="3QAL"/>
<dbReference type="PDBsum" id="3QAM"/>
<dbReference type="PDBsum" id="3TNP"/>
<dbReference type="PDBsum" id="3TNQ"/>
<dbReference type="PDBsum" id="3X2U"/>
<dbReference type="PDBsum" id="3X2V"/>
<dbReference type="PDBsum" id="3X2W"/>
<dbReference type="PDBsum" id="4DFX"/>
<dbReference type="PDBsum" id="4DFY"/>
<dbReference type="PDBsum" id="4DFZ"/>
<dbReference type="PDBsum" id="4DG0"/>
<dbReference type="PDBsum" id="4DG2"/>
<dbReference type="PDBsum" id="4DG3"/>
<dbReference type="PDBsum" id="4DH1"/>
<dbReference type="PDBsum" id="4DH3"/>
<dbReference type="PDBsum" id="4DH5"/>
<dbReference type="PDBsum" id="4DH7"/>
<dbReference type="PDBsum" id="4DH8"/>
<dbReference type="PDBsum" id="4DIN"/>
<dbReference type="PDBsum" id="4HPT"/>
<dbReference type="PDBsum" id="4HPU"/>
<dbReference type="PDBsum" id="4IAC"/>
<dbReference type="PDBsum" id="4IAD"/>
<dbReference type="PDBsum" id="4IAF"/>
<dbReference type="PDBsum" id="4IAI"/>
<dbReference type="PDBsum" id="4IAK"/>
<dbReference type="PDBsum" id="4IAY"/>
<dbReference type="PDBsum" id="4IAZ"/>
<dbReference type="PDBsum" id="4IB0"/>
<dbReference type="PDBsum" id="4IB1"/>
<dbReference type="PDBsum" id="4IB3"/>
<dbReference type="PDBsum" id="4NTS"/>
<dbReference type="PDBsum" id="4NTT"/>
<dbReference type="PDBsum" id="4O21"/>
<dbReference type="PDBsum" id="4O22"/>
<dbReference type="PDBsum" id="4WBB"/>
<dbReference type="PDBsum" id="4X6Q"/>
<dbReference type="PDBsum" id="4X6R"/>
<dbReference type="PDBsum" id="4XW4"/>
<dbReference type="PDBsum" id="4XW5"/>
<dbReference type="PDBsum" id="4XW6"/>
<dbReference type="PDBsum" id="5JR7"/>
<dbReference type="PDBsum" id="5X3F"/>
<dbReference type="PDBsum" id="6E21"/>
<dbReference type="PDBsum" id="6MM5"/>
<dbReference type="PDBsum" id="6MM6"/>
<dbReference type="PDBsum" id="6MM7"/>
<dbReference type="PDBsum" id="6MM8"/>
<dbReference type="PDBsum" id="7E0Z"/>
<dbReference type="PDBsum" id="7E11"/>
<dbReference type="PDBsum" id="7E12"/>
<dbReference type="PDBsum" id="7UJX"/>
<dbReference type="PDBsum" id="7V0G"/>
<dbReference type="PDBsum" id="8UKN"/>
<dbReference type="PDBsum" id="8UKO"/>
<dbReference type="PDBsum" id="8UKP"/>
<dbReference type="BMRB" id="P05132"/>
<dbReference type="EMDB" id="EMD-0409"/>
<dbReference type="EMDB" id="EMD-5755"/>
<dbReference type="EMDB" id="EMD-5756"/>
<dbReference type="SMR" id="P05132"/>
<dbReference type="BioGRID" id="202192">
    <property type="interactions" value="65"/>
</dbReference>
<dbReference type="CORUM" id="P05132"/>
<dbReference type="DIP" id="DIP-6086N"/>
<dbReference type="ELM" id="P05132"/>
<dbReference type="FunCoup" id="P05132">
    <property type="interactions" value="4000"/>
</dbReference>
<dbReference type="IntAct" id="P05132">
    <property type="interactions" value="23"/>
</dbReference>
<dbReference type="MINT" id="P05132"/>
<dbReference type="STRING" id="10090.ENSMUSP00000005606"/>
<dbReference type="BindingDB" id="P05132"/>
<dbReference type="GlyGen" id="P05132">
    <property type="glycosylation" value="1 site, 1 O-linked glycan (1 site)"/>
</dbReference>
<dbReference type="iPTMnet" id="P05132"/>
<dbReference type="PhosphoSitePlus" id="P05132"/>
<dbReference type="SwissPalm" id="P05132"/>
<dbReference type="jPOST" id="P05132"/>
<dbReference type="PaxDb" id="10090-ENSMUSP00000005606"/>
<dbReference type="PeptideAtlas" id="P05132"/>
<dbReference type="ProteomicsDB" id="269063">
    <molecule id="P05132-1"/>
</dbReference>
<dbReference type="ProteomicsDB" id="269064">
    <molecule id="P05132-2"/>
</dbReference>
<dbReference type="Pumba" id="P05132"/>
<dbReference type="Antibodypedia" id="4159">
    <property type="antibodies" value="507 antibodies from 42 providers"/>
</dbReference>
<dbReference type="DNASU" id="18747"/>
<dbReference type="Ensembl" id="ENSMUST00000005606.8">
    <molecule id="P05132-1"/>
    <property type="protein sequence ID" value="ENSMUSP00000005606.7"/>
    <property type="gene ID" value="ENSMUSG00000005469.11"/>
</dbReference>
<dbReference type="Ensembl" id="ENSMUST00000211558.2">
    <molecule id="P05132-2"/>
    <property type="protein sequence ID" value="ENSMUSP00000147256.2"/>
    <property type="gene ID" value="ENSMUSG00000005469.11"/>
</dbReference>
<dbReference type="GeneID" id="18747"/>
<dbReference type="KEGG" id="mmu:18747"/>
<dbReference type="UCSC" id="uc009mll.3">
    <molecule id="P05132-1"/>
    <property type="organism name" value="mouse"/>
</dbReference>
<dbReference type="UCSC" id="uc009mlm.2">
    <molecule id="P05132-2"/>
    <property type="organism name" value="mouse"/>
</dbReference>
<dbReference type="AGR" id="MGI:97592"/>
<dbReference type="CTD" id="5566"/>
<dbReference type="MGI" id="MGI:97592">
    <property type="gene designation" value="Prkaca"/>
</dbReference>
<dbReference type="VEuPathDB" id="HostDB:ENSMUSG00000005469"/>
<dbReference type="eggNOG" id="KOG0616">
    <property type="taxonomic scope" value="Eukaryota"/>
</dbReference>
<dbReference type="GeneTree" id="ENSGT00940000162186"/>
<dbReference type="HOGENOM" id="CLU_000288_63_5_1"/>
<dbReference type="InParanoid" id="P05132"/>
<dbReference type="OMA" id="NDPFFDW"/>
<dbReference type="OrthoDB" id="63267at2759"/>
<dbReference type="PhylomeDB" id="P05132"/>
<dbReference type="TreeFam" id="TF313399"/>
<dbReference type="BRENDA" id="2.7.11.11">
    <property type="organism ID" value="3474"/>
</dbReference>
<dbReference type="Reactome" id="R-MMU-163615">
    <property type="pathway name" value="PKA activation"/>
</dbReference>
<dbReference type="Reactome" id="R-MMU-164378">
    <property type="pathway name" value="PKA activation in glucagon signalling"/>
</dbReference>
<dbReference type="Reactome" id="R-MMU-180024">
    <property type="pathway name" value="DARPP-32 events"/>
</dbReference>
<dbReference type="Reactome" id="R-MMU-2565942">
    <property type="pathway name" value="Regulation of PLK1 Activity at G2/M Transition"/>
</dbReference>
<dbReference type="Reactome" id="R-MMU-380259">
    <property type="pathway name" value="Loss of Nlp from mitotic centrosomes"/>
</dbReference>
<dbReference type="Reactome" id="R-MMU-380270">
    <property type="pathway name" value="Recruitment of mitotic centrosome proteins and complexes"/>
</dbReference>
<dbReference type="Reactome" id="R-MMU-380284">
    <property type="pathway name" value="Loss of proteins required for interphase microtubule organization from the centrosome"/>
</dbReference>
<dbReference type="Reactome" id="R-MMU-380320">
    <property type="pathway name" value="Recruitment of NuMA to mitotic centrosomes"/>
</dbReference>
<dbReference type="Reactome" id="R-MMU-381676">
    <property type="pathway name" value="Glucagon-like Peptide-1 (GLP1) regulates insulin secretion"/>
</dbReference>
<dbReference type="Reactome" id="R-MMU-392517">
    <property type="pathway name" value="Rap1 signalling"/>
</dbReference>
<dbReference type="Reactome" id="R-MMU-422356">
    <property type="pathway name" value="Regulation of insulin secretion"/>
</dbReference>
<dbReference type="Reactome" id="R-MMU-432040">
    <property type="pathway name" value="Vasopressin regulates renal water homeostasis via Aquaporins"/>
</dbReference>
<dbReference type="Reactome" id="R-MMU-4420097">
    <property type="pathway name" value="VEGFA-VEGFR2 Pathway"/>
</dbReference>
<dbReference type="Reactome" id="R-MMU-442720">
    <property type="pathway name" value="CREB1 phosphorylation through the activation of Adenylate Cyclase"/>
</dbReference>
<dbReference type="Reactome" id="R-MMU-512988">
    <property type="pathway name" value="Interleukin-3, Interleukin-5 and GM-CSF signaling"/>
</dbReference>
<dbReference type="Reactome" id="R-MMU-5578775">
    <property type="pathway name" value="Ion homeostasis"/>
</dbReference>
<dbReference type="Reactome" id="R-MMU-5610785">
    <property type="pathway name" value="GLI3 is processed to GLI3R by the proteasome"/>
</dbReference>
<dbReference type="Reactome" id="R-MMU-5610787">
    <property type="pathway name" value="Hedgehog 'off' state"/>
</dbReference>
<dbReference type="Reactome" id="R-MMU-5620912">
    <property type="pathway name" value="Anchoring of the basal body to the plasma membrane"/>
</dbReference>
<dbReference type="Reactome" id="R-MMU-5621575">
    <property type="pathway name" value="CD209 (DC-SIGN) signaling"/>
</dbReference>
<dbReference type="Reactome" id="R-MMU-5687128">
    <property type="pathway name" value="MAPK6/MAPK4 signaling"/>
</dbReference>
<dbReference type="Reactome" id="R-MMU-8853659">
    <property type="pathway name" value="RET signaling"/>
</dbReference>
<dbReference type="Reactome" id="R-MMU-8854518">
    <property type="pathway name" value="AURKA Activation by TPX2"/>
</dbReference>
<dbReference type="Reactome" id="R-MMU-8963896">
    <property type="pathway name" value="HDL assembly"/>
</dbReference>
<dbReference type="Reactome" id="R-MMU-9634597">
    <property type="pathway name" value="GPER1 signaling"/>
</dbReference>
<dbReference type="Reactome" id="R-MMU-983231">
    <property type="pathway name" value="Factors involved in megakaryocyte development and platelet production"/>
</dbReference>
<dbReference type="Reactome" id="R-MMU-9837999">
    <property type="pathway name" value="Mitochondrial protein degradation"/>
</dbReference>
<dbReference type="Reactome" id="R-MMU-9856530">
    <property type="pathway name" value="High laminar flow shear stress activates signaling by PIEZO1 and PECAM1:CDH5:KDR in endothelial cells"/>
</dbReference>
<dbReference type="BioGRID-ORCS" id="18747">
    <property type="hits" value="4 hits in 82 CRISPR screens"/>
</dbReference>
<dbReference type="ChiTaRS" id="Prkaca">
    <property type="organism name" value="mouse"/>
</dbReference>
<dbReference type="EvolutionaryTrace" id="P05132"/>
<dbReference type="PRO" id="PR:P05132"/>
<dbReference type="Proteomes" id="UP000000589">
    <property type="component" value="Chromosome 8"/>
</dbReference>
<dbReference type="RNAct" id="P05132">
    <property type="molecule type" value="protein"/>
</dbReference>
<dbReference type="Bgee" id="ENSMUSG00000005469">
    <property type="expression patterns" value="Expressed in dentate gyrus of hippocampal formation granule cell and 276 other cell types or tissues"/>
</dbReference>
<dbReference type="GO" id="GO:0001669">
    <property type="term" value="C:acrosomal vesicle"/>
    <property type="evidence" value="ECO:0000314"/>
    <property type="project" value="UniProtKB"/>
</dbReference>
<dbReference type="GO" id="GO:0005930">
    <property type="term" value="C:axoneme"/>
    <property type="evidence" value="ECO:0007669"/>
    <property type="project" value="Ensembl"/>
</dbReference>
<dbReference type="GO" id="GO:0005952">
    <property type="term" value="C:cAMP-dependent protein kinase complex"/>
    <property type="evidence" value="ECO:0000315"/>
    <property type="project" value="CAFA"/>
</dbReference>
<dbReference type="GO" id="GO:0005813">
    <property type="term" value="C:centrosome"/>
    <property type="evidence" value="ECO:0007669"/>
    <property type="project" value="Ensembl"/>
</dbReference>
<dbReference type="GO" id="GO:0097546">
    <property type="term" value="C:ciliary base"/>
    <property type="evidence" value="ECO:0000314"/>
    <property type="project" value="MGI"/>
</dbReference>
<dbReference type="GO" id="GO:0005737">
    <property type="term" value="C:cytoplasm"/>
    <property type="evidence" value="ECO:0000314"/>
    <property type="project" value="MGI"/>
</dbReference>
<dbReference type="GO" id="GO:0005829">
    <property type="term" value="C:cytosol"/>
    <property type="evidence" value="ECO:0000314"/>
    <property type="project" value="MGI"/>
</dbReference>
<dbReference type="GO" id="GO:0098978">
    <property type="term" value="C:glutamatergic synapse"/>
    <property type="evidence" value="ECO:0000314"/>
    <property type="project" value="SynGO"/>
</dbReference>
<dbReference type="GO" id="GO:0005739">
    <property type="term" value="C:mitochondrion"/>
    <property type="evidence" value="ECO:0000314"/>
    <property type="project" value="MGI"/>
</dbReference>
<dbReference type="GO" id="GO:0031594">
    <property type="term" value="C:neuromuscular junction"/>
    <property type="evidence" value="ECO:0000314"/>
    <property type="project" value="MGI"/>
</dbReference>
<dbReference type="GO" id="GO:0016607">
    <property type="term" value="C:nuclear speck"/>
    <property type="evidence" value="ECO:0007669"/>
    <property type="project" value="Ensembl"/>
</dbReference>
<dbReference type="GO" id="GO:0005654">
    <property type="term" value="C:nucleoplasm"/>
    <property type="evidence" value="ECO:0000304"/>
    <property type="project" value="Reactome"/>
</dbReference>
<dbReference type="GO" id="GO:0005634">
    <property type="term" value="C:nucleus"/>
    <property type="evidence" value="ECO:0000314"/>
    <property type="project" value="MGI"/>
</dbReference>
<dbReference type="GO" id="GO:0048471">
    <property type="term" value="C:perinuclear region of cytoplasm"/>
    <property type="evidence" value="ECO:0000250"/>
    <property type="project" value="UniProtKB"/>
</dbReference>
<dbReference type="GO" id="GO:0005886">
    <property type="term" value="C:plasma membrane"/>
    <property type="evidence" value="ECO:0000314"/>
    <property type="project" value="MGI"/>
</dbReference>
<dbReference type="GO" id="GO:0044853">
    <property type="term" value="C:plasma membrane raft"/>
    <property type="evidence" value="ECO:0007669"/>
    <property type="project" value="Ensembl"/>
</dbReference>
<dbReference type="GO" id="GO:0098794">
    <property type="term" value="C:postsynapse"/>
    <property type="evidence" value="ECO:0007669"/>
    <property type="project" value="GOC"/>
</dbReference>
<dbReference type="GO" id="GO:0036126">
    <property type="term" value="C:sperm flagellum"/>
    <property type="evidence" value="ECO:0000314"/>
    <property type="project" value="UniProtKB"/>
</dbReference>
<dbReference type="GO" id="GO:0097225">
    <property type="term" value="C:sperm midpiece"/>
    <property type="evidence" value="ECO:0000250"/>
    <property type="project" value="UniProtKB"/>
</dbReference>
<dbReference type="GO" id="GO:0005524">
    <property type="term" value="F:ATP binding"/>
    <property type="evidence" value="ECO:0000314"/>
    <property type="project" value="CAFA"/>
</dbReference>
<dbReference type="GO" id="GO:0004691">
    <property type="term" value="F:cAMP-dependent protein kinase activity"/>
    <property type="evidence" value="ECO:0000314"/>
    <property type="project" value="UniProtKB"/>
</dbReference>
<dbReference type="GO" id="GO:0000287">
    <property type="term" value="F:magnesium ion binding"/>
    <property type="evidence" value="ECO:0000314"/>
    <property type="project" value="CAFA"/>
</dbReference>
<dbReference type="GO" id="GO:0030145">
    <property type="term" value="F:manganese ion binding"/>
    <property type="evidence" value="ECO:0000315"/>
    <property type="project" value="CAFA"/>
</dbReference>
<dbReference type="GO" id="GO:0019904">
    <property type="term" value="F:protein domain specific binding"/>
    <property type="evidence" value="ECO:0000353"/>
    <property type="project" value="CAFA"/>
</dbReference>
<dbReference type="GO" id="GO:0034237">
    <property type="term" value="F:protein kinase A regulatory subunit binding"/>
    <property type="evidence" value="ECO:0000353"/>
    <property type="project" value="CAFA"/>
</dbReference>
<dbReference type="GO" id="GO:0004672">
    <property type="term" value="F:protein kinase activity"/>
    <property type="evidence" value="ECO:0000314"/>
    <property type="project" value="MGI"/>
</dbReference>
<dbReference type="GO" id="GO:0019901">
    <property type="term" value="F:protein kinase binding"/>
    <property type="evidence" value="ECO:0007669"/>
    <property type="project" value="Ensembl"/>
</dbReference>
<dbReference type="GO" id="GO:0106310">
    <property type="term" value="F:protein serine kinase activity"/>
    <property type="evidence" value="ECO:0007669"/>
    <property type="project" value="Ensembl"/>
</dbReference>
<dbReference type="GO" id="GO:0004674">
    <property type="term" value="F:protein serine/threonine kinase activity"/>
    <property type="evidence" value="ECO:0000314"/>
    <property type="project" value="UniProtKB"/>
</dbReference>
<dbReference type="GO" id="GO:0004712">
    <property type="term" value="F:protein serine/threonine/tyrosine kinase activity"/>
    <property type="evidence" value="ECO:0000266"/>
    <property type="project" value="MGI"/>
</dbReference>
<dbReference type="GO" id="GO:0031625">
    <property type="term" value="F:ubiquitin protein ligase binding"/>
    <property type="evidence" value="ECO:0007669"/>
    <property type="project" value="Ensembl"/>
</dbReference>
<dbReference type="GO" id="GO:0007189">
    <property type="term" value="P:adenylate cyclase-activating G protein-coupled receptor signaling pathway"/>
    <property type="evidence" value="ECO:0000314"/>
    <property type="project" value="MGI"/>
</dbReference>
<dbReference type="GO" id="GO:0007193">
    <property type="term" value="P:adenylate cyclase-inhibiting G protein-coupled receptor signaling pathway"/>
    <property type="evidence" value="ECO:0007669"/>
    <property type="project" value="Ensembl"/>
</dbReference>
<dbReference type="GO" id="GO:0141156">
    <property type="term" value="P:cAMP/PKA signal transduction"/>
    <property type="evidence" value="ECO:0000266"/>
    <property type="project" value="MGI"/>
</dbReference>
<dbReference type="GO" id="GO:0070417">
    <property type="term" value="P:cellular response to cold"/>
    <property type="evidence" value="ECO:0000315"/>
    <property type="project" value="MGI"/>
</dbReference>
<dbReference type="GO" id="GO:0071377">
    <property type="term" value="P:cellular response to glucagon stimulus"/>
    <property type="evidence" value="ECO:0000316"/>
    <property type="project" value="MGI"/>
</dbReference>
<dbReference type="GO" id="GO:0071333">
    <property type="term" value="P:cellular response to glucose stimulus"/>
    <property type="evidence" value="ECO:0007669"/>
    <property type="project" value="Ensembl"/>
</dbReference>
<dbReference type="GO" id="GO:0034605">
    <property type="term" value="P:cellular response to heat"/>
    <property type="evidence" value="ECO:0000250"/>
    <property type="project" value="UniProtKB"/>
</dbReference>
<dbReference type="GO" id="GO:0071374">
    <property type="term" value="P:cellular response to parathyroid hormone stimulus"/>
    <property type="evidence" value="ECO:0000315"/>
    <property type="project" value="MGI"/>
</dbReference>
<dbReference type="GO" id="GO:0030007">
    <property type="term" value="P:intracellular potassium ion homeostasis"/>
    <property type="evidence" value="ECO:0007669"/>
    <property type="project" value="Ensembl"/>
</dbReference>
<dbReference type="GO" id="GO:0001707">
    <property type="term" value="P:mesoderm formation"/>
    <property type="evidence" value="ECO:0000316"/>
    <property type="project" value="MGI"/>
</dbReference>
<dbReference type="GO" id="GO:0050804">
    <property type="term" value="P:modulation of chemical synaptic transmission"/>
    <property type="evidence" value="ECO:0000315"/>
    <property type="project" value="MGI"/>
</dbReference>
<dbReference type="GO" id="GO:0006397">
    <property type="term" value="P:mRNA processing"/>
    <property type="evidence" value="ECO:0007669"/>
    <property type="project" value="Ensembl"/>
</dbReference>
<dbReference type="GO" id="GO:1904539">
    <property type="term" value="P:negative regulation of glycolytic process through fructose-6-phosphate"/>
    <property type="evidence" value="ECO:0000314"/>
    <property type="project" value="MGI"/>
</dbReference>
<dbReference type="GO" id="GO:0045879">
    <property type="term" value="P:negative regulation of smoothened signaling pathway"/>
    <property type="evidence" value="ECO:0000316"/>
    <property type="project" value="MGI"/>
</dbReference>
<dbReference type="GO" id="GO:1904262">
    <property type="term" value="P:negative regulation of TORC1 signaling"/>
    <property type="evidence" value="ECO:0000250"/>
    <property type="project" value="UniProtKB"/>
</dbReference>
<dbReference type="GO" id="GO:0000122">
    <property type="term" value="P:negative regulation of transcription by RNA polymerase II"/>
    <property type="evidence" value="ECO:0000266"/>
    <property type="project" value="MGI"/>
</dbReference>
<dbReference type="GO" id="GO:0001843">
    <property type="term" value="P:neural tube closure"/>
    <property type="evidence" value="ECO:0000316"/>
    <property type="project" value="MGI"/>
</dbReference>
<dbReference type="GO" id="GO:0018105">
    <property type="term" value="P:peptidyl-serine phosphorylation"/>
    <property type="evidence" value="ECO:0000314"/>
    <property type="project" value="CAFA"/>
</dbReference>
<dbReference type="GO" id="GO:0045542">
    <property type="term" value="P:positive regulation of cholesterol biosynthetic process"/>
    <property type="evidence" value="ECO:0007669"/>
    <property type="project" value="Ensembl"/>
</dbReference>
<dbReference type="GO" id="GO:0045722">
    <property type="term" value="P:positive regulation of gluconeogenesis"/>
    <property type="evidence" value="ECO:0000314"/>
    <property type="project" value="MGI"/>
</dbReference>
<dbReference type="GO" id="GO:0032024">
    <property type="term" value="P:positive regulation of insulin secretion"/>
    <property type="evidence" value="ECO:0000314"/>
    <property type="project" value="MGI"/>
</dbReference>
<dbReference type="GO" id="GO:0050766">
    <property type="term" value="P:positive regulation of phagocytosis"/>
    <property type="evidence" value="ECO:0007669"/>
    <property type="project" value="Ensembl"/>
</dbReference>
<dbReference type="GO" id="GO:0046827">
    <property type="term" value="P:positive regulation of protein export from nucleus"/>
    <property type="evidence" value="ECO:0000315"/>
    <property type="project" value="MGI"/>
</dbReference>
<dbReference type="GO" id="GO:0099170">
    <property type="term" value="P:postsynaptic modulation of chemical synaptic transmission"/>
    <property type="evidence" value="ECO:0000314"/>
    <property type="project" value="SynGO"/>
</dbReference>
<dbReference type="GO" id="GO:0006611">
    <property type="term" value="P:protein export from nucleus"/>
    <property type="evidence" value="ECO:0000314"/>
    <property type="project" value="MGI"/>
</dbReference>
<dbReference type="GO" id="GO:1990044">
    <property type="term" value="P:protein localization to lipid droplet"/>
    <property type="evidence" value="ECO:0000315"/>
    <property type="project" value="MGI"/>
</dbReference>
<dbReference type="GO" id="GO:2000810">
    <property type="term" value="P:regulation of bicellular tight junction assembly"/>
    <property type="evidence" value="ECO:0007669"/>
    <property type="project" value="Ensembl"/>
</dbReference>
<dbReference type="GO" id="GO:0051726">
    <property type="term" value="P:regulation of cell cycle"/>
    <property type="evidence" value="ECO:0000314"/>
    <property type="project" value="UniProtKB"/>
</dbReference>
<dbReference type="GO" id="GO:0045667">
    <property type="term" value="P:regulation of osteoblast differentiation"/>
    <property type="evidence" value="ECO:0007669"/>
    <property type="project" value="Ensembl"/>
</dbReference>
<dbReference type="GO" id="GO:0061136">
    <property type="term" value="P:regulation of proteasomal protein catabolic process"/>
    <property type="evidence" value="ECO:0007669"/>
    <property type="project" value="Ensembl"/>
</dbReference>
<dbReference type="GO" id="GO:0070613">
    <property type="term" value="P:regulation of protein processing"/>
    <property type="evidence" value="ECO:0000316"/>
    <property type="project" value="MGI"/>
</dbReference>
<dbReference type="GO" id="GO:0048240">
    <property type="term" value="P:sperm capacitation"/>
    <property type="evidence" value="ECO:0000314"/>
    <property type="project" value="UniProtKB"/>
</dbReference>
<dbReference type="CDD" id="cd14209">
    <property type="entry name" value="STKc_PKA"/>
    <property type="match status" value="1"/>
</dbReference>
<dbReference type="FunFam" id="3.30.200.20:FF:000005">
    <property type="entry name" value="cAMP-dependent protein kinase catalytic subunit"/>
    <property type="match status" value="1"/>
</dbReference>
<dbReference type="FunFam" id="1.10.510.10:FF:000005">
    <property type="entry name" value="cAMP-dependent protein kinase catalytic subunit alpha"/>
    <property type="match status" value="1"/>
</dbReference>
<dbReference type="Gene3D" id="3.30.200.20">
    <property type="entry name" value="Phosphorylase Kinase, domain 1"/>
    <property type="match status" value="1"/>
</dbReference>
<dbReference type="Gene3D" id="1.10.510.10">
    <property type="entry name" value="Transferase(Phosphotransferase) domain 1"/>
    <property type="match status" value="1"/>
</dbReference>
<dbReference type="IDEAL" id="IID50138"/>
<dbReference type="InterPro" id="IPR000961">
    <property type="entry name" value="AGC-kinase_C"/>
</dbReference>
<dbReference type="InterPro" id="IPR011009">
    <property type="entry name" value="Kinase-like_dom_sf"/>
</dbReference>
<dbReference type="InterPro" id="IPR000719">
    <property type="entry name" value="Prot_kinase_dom"/>
</dbReference>
<dbReference type="InterPro" id="IPR017441">
    <property type="entry name" value="Protein_kinase_ATP_BS"/>
</dbReference>
<dbReference type="InterPro" id="IPR008271">
    <property type="entry name" value="Ser/Thr_kinase_AS"/>
</dbReference>
<dbReference type="InterPro" id="IPR044109">
    <property type="entry name" value="STKc_PKA"/>
</dbReference>
<dbReference type="PANTHER" id="PTHR24353:SF82">
    <property type="entry name" value="CAMP-DEPENDENT PROTEIN KINASE CATALYTIC SUBUNIT ALPHA"/>
    <property type="match status" value="1"/>
</dbReference>
<dbReference type="PANTHER" id="PTHR24353">
    <property type="entry name" value="CYCLIC NUCLEOTIDE-DEPENDENT PROTEIN KINASE"/>
    <property type="match status" value="1"/>
</dbReference>
<dbReference type="Pfam" id="PF00069">
    <property type="entry name" value="Pkinase"/>
    <property type="match status" value="1"/>
</dbReference>
<dbReference type="SMART" id="SM00133">
    <property type="entry name" value="S_TK_X"/>
    <property type="match status" value="1"/>
</dbReference>
<dbReference type="SMART" id="SM00220">
    <property type="entry name" value="S_TKc"/>
    <property type="match status" value="1"/>
</dbReference>
<dbReference type="SUPFAM" id="SSF56112">
    <property type="entry name" value="Protein kinase-like (PK-like)"/>
    <property type="match status" value="1"/>
</dbReference>
<dbReference type="PROSITE" id="PS51285">
    <property type="entry name" value="AGC_KINASE_CTER"/>
    <property type="match status" value="1"/>
</dbReference>
<dbReference type="PROSITE" id="PS00107">
    <property type="entry name" value="PROTEIN_KINASE_ATP"/>
    <property type="match status" value="1"/>
</dbReference>
<dbReference type="PROSITE" id="PS50011">
    <property type="entry name" value="PROTEIN_KINASE_DOM"/>
    <property type="match status" value="1"/>
</dbReference>
<dbReference type="PROSITE" id="PS00108">
    <property type="entry name" value="PROTEIN_KINASE_ST"/>
    <property type="match status" value="1"/>
</dbReference>
<accession>P05132</accession>
<accession>Q9JID0</accession>
<reference key="1">
    <citation type="journal article" date="1988" name="J. Biol. Chem.">
        <title>Characterization of genomic clones coding for the C alpha and C beta subunits of mouse cAMP-dependent protein kinase.</title>
        <authorList>
            <person name="Chrivia J.C."/>
            <person name="Uhler M.D."/>
            <person name="McKnight G.S."/>
        </authorList>
    </citation>
    <scope>NUCLEOTIDE SEQUENCE [GENOMIC DNA] (ISOFORM 1)</scope>
</reference>
<reference key="2">
    <citation type="journal article" date="1986" name="Proc. Natl. Acad. Sci. U.S.A.">
        <title>Isolation of cDNA clones coding for the catalytic subunit of mouse cAMP-dependent protein kinase.</title>
        <authorList>
            <person name="Uhler M.D."/>
            <person name="Carmichael D.F."/>
            <person name="Lee D.C."/>
            <person name="Chrivia J.C."/>
            <person name="Krebs E.G."/>
            <person name="McKnight G.S."/>
        </authorList>
    </citation>
    <scope>NUCLEOTIDE SEQUENCE [MRNA] (ISOFORM 1)</scope>
</reference>
<reference key="3">
    <citation type="journal article" date="2004" name="Genome Res.">
        <title>The status, quality, and expansion of the NIH full-length cDNA project: the Mammalian Gene Collection (MGC).</title>
        <authorList>
            <consortium name="The MGC Project Team"/>
        </authorList>
    </citation>
    <scope>NUCLEOTIDE SEQUENCE [LARGE SCALE MRNA] (ISOFORM 1)</scope>
    <source>
        <strain>FVB/N-3</strain>
        <tissue>Mammary tumor</tissue>
    </source>
</reference>
<reference key="4">
    <citation type="journal article" date="2000" name="Mol. Biol. Cell">
        <title>The unique catalytic subunit of sperm cAMP-dependent protein kinase is the product of an alternative C-alpha mRNA expressed specifically in spermatogenic cells.</title>
        <authorList>
            <person name="San Agustin J.T."/>
            <person name="Wilkerson C.G."/>
            <person name="Witman G.B."/>
        </authorList>
    </citation>
    <scope>NUCLEOTIDE SEQUENCE [MRNA] OF 1-153 (ISOFORM 2)</scope>
    <scope>TISSUE SPECIFICITY (ISOFORM 2)</scope>
    <source>
        <tissue>Testis</tissue>
    </source>
</reference>
<reference key="5">
    <citation type="journal article" date="1993" name="J. Biol. Chem.">
        <title>Identification of phosphorylation sites in the recombinant catalytic subunit of cAMP-dependent protein kinase.</title>
        <authorList>
            <person name="Yonemoto W."/>
            <person name="Garrod S.M."/>
            <person name="Bell S.M."/>
            <person name="Taylor S.S."/>
        </authorList>
    </citation>
    <scope>PHOSPHORYLATION AT SER-11; SER-140; THR-198 AND SER-339</scope>
</reference>
<reference key="6">
    <citation type="journal article" date="1998" name="Proc. Natl. Acad. Sci. U.S.A.">
        <title>Phosphorylation and activation of cAMP-dependent protein kinase by phosphoinositide-dependent protein kinase.</title>
        <authorList>
            <person name="Cheng X."/>
            <person name="Ma Y."/>
            <person name="Moore M."/>
            <person name="Hemmings B.A."/>
            <person name="Taylor S.S."/>
        </authorList>
    </citation>
    <scope>PHOSPHORYLATION AT THR-198 BY PDPK1</scope>
    <scope>MUTAGENESIS OF THR-198</scope>
</reference>
<reference key="7">
    <citation type="journal article" date="2000" name="Mol. Cell. Biol.">
        <title>Phosphorylation of SOX9 by cyclic AMP-dependent protein kinase A enhances SOX9's ability to transactivate a Col2a1 chondrocyte-specific enhancer.</title>
        <authorList>
            <person name="Huang W."/>
            <person name="Zhou X."/>
            <person name="Lefebvre V."/>
            <person name="de Crombrugghe B."/>
        </authorList>
    </citation>
    <scope>FUNCTION</scope>
    <scope>CATALYTIC ACTIVITY</scope>
</reference>
<reference key="8">
    <citation type="journal article" date="2001" name="Biochemistry">
        <title>Influence of myristoylation, phosphorylation, and deamidation on the structural behavior of the N-terminus of the catalytic subunit of cAMP-dependent protein kinase.</title>
        <authorList>
            <person name="Tholey A."/>
            <person name="Pipkorn R."/>
            <person name="Bossemeyer D."/>
            <person name="Kinzel V."/>
            <person name="Reed J."/>
        </authorList>
    </citation>
    <scope>MYRISTOYLATION AT GLY-2</scope>
    <scope>PHOSPHORYLATION AT SER-11</scope>
    <scope>DEAMIDATION AT ASN-3</scope>
</reference>
<reference key="9">
    <citation type="journal article" date="2002" name="Mol. Endocrinol.">
        <title>Mutation of the Calpha subunit of PKA leads to growth retardation and sperm dysfunction.</title>
        <authorList>
            <person name="Skaalhegg B.S."/>
            <person name="Huang Y."/>
            <person name="Su T."/>
            <person name="Idzerda R.L."/>
            <person name="McKnight G.S."/>
            <person name="Burton K.A."/>
        </authorList>
    </citation>
    <scope>DISRUPTION PHENOTYPE</scope>
</reference>
<reference key="10">
    <citation type="journal article" date="2004" name="Proc. Natl. Acad. Sci. U.S.A.">
        <title>Sperm-specific protein kinase A catalytic subunit Calpha2 orchestrates cAMP signaling for male fertility.</title>
        <authorList>
            <person name="Nolan M.A."/>
            <person name="Babcock D.F."/>
            <person name="Wennemuth G."/>
            <person name="Brown W."/>
            <person name="Burton K.A."/>
            <person name="McKnight G.S."/>
        </authorList>
    </citation>
    <scope>FUNCTION IN SPERMATOZOA CAPACITATION (ISOFORM 2)</scope>
    <scope>TISSUE SPECIFICITY (ISOFORM 2)</scope>
</reference>
<reference key="11">
    <citation type="journal article" date="2008" name="Dev. Biol.">
        <title>Developmentally acquired PKA localisation in mouse oocytes and embryos.</title>
        <authorList>
            <person name="Webb R.J."/>
            <person name="Tinworth L."/>
            <person name="Thomas G.M."/>
            <person name="Zaccolo M."/>
            <person name="Carroll J."/>
        </authorList>
    </citation>
    <scope>SUBCELLULAR LOCATION</scope>
    <scope>DEVELOPMENTAL STAGE</scope>
</reference>
<reference key="12">
    <citation type="journal article" date="2009" name="Cell Cycle">
        <title>Protein kinase A regulates resumption of meiosis by phosphorylation of Cdc25B in mammalian oocytes.</title>
        <authorList>
            <person name="Pirino G."/>
            <person name="Wescott M.P."/>
            <person name="Donovan P.J."/>
        </authorList>
    </citation>
    <scope>FUNCTION IN MEIOSIS RESUMPTION</scope>
    <scope>FUNCTION AS CDC25B KINASE</scope>
    <scope>INTERACTION WITH CDC25B</scope>
    <scope>CATALYTIC ACTIVITY</scope>
</reference>
<reference key="13">
    <citation type="journal article" date="2009" name="Dev. Biol.">
        <title>Phosphorylation and consequent stimulation of the tyrosine kinase c-Abl by PKA in mouse spermatozoa; its implications during capacitation.</title>
        <authorList>
            <person name="Baker M.A."/>
            <person name="Hetherington L."/>
            <person name="Curry B."/>
            <person name="Aitken R.J."/>
        </authorList>
    </citation>
    <scope>FUNCTION IN SPERMATOZOA CAPACITATION</scope>
    <scope>FUNCTION AS ABL1 KINASE</scope>
    <scope>INTERACTION WITH ABL1</scope>
</reference>
<reference key="14">
    <citation type="journal article" date="2010" name="Cell">
        <title>A tissue-specific atlas of mouse protein phosphorylation and expression.</title>
        <authorList>
            <person name="Huttlin E.L."/>
            <person name="Jedrychowski M.P."/>
            <person name="Elias J.E."/>
            <person name="Goswami T."/>
            <person name="Rad R."/>
            <person name="Beausoleil S.A."/>
            <person name="Villen J."/>
            <person name="Haas W."/>
            <person name="Sowa M.E."/>
            <person name="Gygi S.P."/>
        </authorList>
    </citation>
    <scope>IDENTIFICATION BY MASS SPECTROMETRY [LARGE SCALE ANALYSIS]</scope>
    <source>
        <tissue>Brain</tissue>
        <tissue>Brown adipose tissue</tissue>
        <tissue>Heart</tissue>
        <tissue>Kidney</tissue>
        <tissue>Liver</tissue>
        <tissue>Lung</tissue>
        <tissue>Pancreas</tissue>
        <tissue>Spleen</tissue>
        <tissue>Testis</tissue>
    </source>
</reference>
<reference key="15">
    <citation type="journal article" date="2012" name="J. Cell. Biochem.">
        <title>Direct modulation of the protein kinase A catalytic subunit alpha by growth factor receptor tyrosine kinases.</title>
        <authorList>
            <person name="Caldwell G.B."/>
            <person name="Howe A.K."/>
            <person name="Nickl C.K."/>
            <person name="Dostmann W.R."/>
            <person name="Ballif B.A."/>
            <person name="Deming P.B."/>
        </authorList>
    </citation>
    <scope>PHOSPHORYLATION AT TYR-331</scope>
</reference>
<reference key="16">
    <citation type="journal article" date="2016" name="FASEB J.">
        <title>A novel germ cell protein, SPIF (sperm PKA interacting factor), is essential for the formation of a PKA/TCP11 complex that undergoes conformational and phosphorylation changes upon capacitation.</title>
        <authorList>
            <person name="Stanger S.J."/>
            <person name="Law E.A."/>
            <person name="Jamsai D."/>
            <person name="O'Bryan M.K."/>
            <person name="Nixon B."/>
            <person name="McLaughlin E.A."/>
            <person name="Aitken R.J."/>
            <person name="Roman S.D."/>
        </authorList>
    </citation>
    <scope>IDENTIFICATION IN A COMPLEX WITH MROH2B AND TCP11</scope>
    <scope>INTERACTION WITH MROH2B AND TCP11</scope>
    <scope>SUBCELLULAR LOCATION</scope>
</reference>
<reference key="17">
    <citation type="journal article" date="2021" name="PLoS Biol.">
        <title>Smoothened transduces Hedgehog signals via activity-dependent sequestration of PKA catalytic subunits.</title>
        <authorList>
            <person name="Arveseth C.D."/>
            <person name="Happ J.T."/>
            <person name="Hedeen D.S."/>
            <person name="Zhu J.F."/>
            <person name="Capener J.L."/>
            <person name="Klatt Shaw D."/>
            <person name="Deshpande I."/>
            <person name="Liang J."/>
            <person name="Xu J."/>
            <person name="Stubben S.L."/>
            <person name="Nelson I.B."/>
            <person name="Walker M.F."/>
            <person name="Kawakami K."/>
            <person name="Inoue A."/>
            <person name="Krogan N.J."/>
            <person name="Grunwald D.J."/>
            <person name="Huettenhain R."/>
            <person name="Manglik A."/>
            <person name="Myers B.R."/>
        </authorList>
    </citation>
    <scope>FUNCTION</scope>
    <scope>INTERACTION WITH SMO</scope>
    <scope>SUBCELLULAR LOCATION</scope>
    <scope>MUTAGENESIS OF LYS-73; HIS-88; TRP-197 AND LEU-206</scope>
</reference>
<reference key="18">
    <citation type="journal article" date="1991" name="Science">
        <title>Crystal structure of the catalytic subunit of cyclic adenosine monophosphate-dependent protein kinase.</title>
        <authorList>
            <person name="Knighton D.R."/>
            <person name="Zheng J."/>
            <person name="ten Eyck L.F."/>
            <person name="Ashford V.A."/>
            <person name="Xuong N.-H."/>
            <person name="Taylor S.S."/>
            <person name="Sowadski J.M."/>
        </authorList>
    </citation>
    <scope>X-RAY CRYSTALLOGRAPHY (2.7 ANGSTROMS)</scope>
</reference>
<reference key="19">
    <citation type="journal article" date="1993" name="Biochemistry">
        <title>Crystal structure of the catalytic subunit of cAMP-dependent protein kinase complexed with MgATP and peptide inhibitor.</title>
        <authorList>
            <person name="Zheng J."/>
            <person name="Knighton D.R."/>
            <person name="ten Eyck L.F."/>
            <person name="Karlsson R."/>
            <person name="Xuong N.-H."/>
            <person name="Taylor S.S."/>
            <person name="Sowadski J.M."/>
        </authorList>
    </citation>
    <scope>X-RAY CRYSTALLOGRAPHY (2.7 ANGSTROMS) OF COMPLEX WITH INHIBITOR</scope>
</reference>
<reference key="20">
    <citation type="journal article" date="1997" name="Biochemistry">
        <title>Crystal structure of a polyhistidine-tagged recombinant catalytic subunit of cAMP-dependent protein kinase complexed with the peptide inhibitor PKI(5-24) and adenosine.</title>
        <authorList>
            <person name="Narayana N."/>
            <person name="Cox S."/>
            <person name="Shaltiel S."/>
            <person name="Taylor S.S."/>
            <person name="Xuong N."/>
        </authorList>
    </citation>
    <scope>X-RAY CRYSTALLOGRAPHY (2.2 ANGSTROMS) OF COMPLEX WITH INHIBITOR</scope>
</reference>
<reference key="21">
    <citation type="journal article" date="1997" name="Structure">
        <title>A binary complex of the catalytic subunit of cAMP-dependent protein kinase and adenosine further defines conformational flexibility.</title>
        <authorList>
            <person name="Narayana N."/>
            <person name="Cox S."/>
            <person name="Nguyen-Huu X."/>
            <person name="ten Eyck L.F."/>
            <person name="Taylor S.S."/>
        </authorList>
    </citation>
    <scope>X-RAY CRYSTALLOGRAPHY (2.6 ANGSTROMS)</scope>
</reference>
<reference key="22">
    <citation type="journal article" date="2007" name="Cell">
        <title>PKA-I holoenzyme structure reveals a mechanism for cAMP-dependent activation.</title>
        <authorList>
            <person name="Kim C."/>
            <person name="Cheng C.Y."/>
            <person name="Saldanha S.A."/>
            <person name="Taylor S.S."/>
        </authorList>
    </citation>
    <scope>X-RAY CRYSTALLOGRAPHY (2.20 ANGSTROMS) IN COMPLEX WITH ATP ANALOG</scope>
</reference>
<reference key="23">
    <citation type="journal article" date="2007" name="Science">
        <title>PKA type IIalpha holoenzyme reveals a combinatorial strategy for isoform diversity.</title>
        <authorList>
            <person name="Wu J."/>
            <person name="Brown S.H."/>
            <person name="von Daake S."/>
            <person name="Taylor S.S."/>
        </authorList>
    </citation>
    <scope>X-RAY CRYSTALLOGRAPHY (2.50 ANGSTROMS)</scope>
</reference>
<reference key="24">
    <citation type="journal article" date="2009" name="J. Biol. Chem.">
        <title>Contribution of non-catalytic core residues to activity and regulation in protein kinase A.</title>
        <authorList>
            <person name="Yang J."/>
            <person name="Kennedy E.J."/>
            <person name="Wu J."/>
            <person name="Deal M.S."/>
            <person name="Pennypacker J."/>
            <person name="Ghosh G."/>
            <person name="Taylor S.S."/>
        </authorList>
    </citation>
    <scope>X-RAY CRYSTALLOGRAPHY (2.50 ANGSTROMS) IN COMPLEX WITH ADP</scope>
    <scope>SUBUNIT</scope>
    <scope>MUTAGENESIS OF LYS-286 AND PHE-328</scope>
</reference>
<reference key="25">
    <citation type="journal article" date="2009" name="J. Mol. Biol.">
        <title>Novel isoform-specific interfaces revealed by PKA RIIbeta holoenzyme structures.</title>
        <authorList>
            <person name="Brown S.H.J."/>
            <person name="Wu J."/>
            <person name="Kim C."/>
            <person name="Alberto K."/>
            <person name="Taylor S.S."/>
        </authorList>
    </citation>
    <scope>X-RAY CRYSTALLOGRAPHY (1.62 ANGSTROMS) IN COMPLEX WITH ATP ANALOGS</scope>
</reference>
<reference key="26">
    <citation type="journal article" date="2010" name="Nat. Chem. Biol.">
        <title>Dynamics connect substrate recognition to catalysis in protein kinase A.</title>
        <authorList>
            <person name="Masterson L.R."/>
            <person name="Cheng C."/>
            <person name="Yu T."/>
            <person name="Tonelli M."/>
            <person name="Kornev A."/>
            <person name="Taylor S.S."/>
            <person name="Veglia G."/>
        </authorList>
    </citation>
    <scope>X-RAY CRYSTALLOGRAPHY (2.80 ANGSTROMS) IN COMPLEX WITH ATP ANALOG AND SUBSTRATE PEPTIDE</scope>
    <scope>ACTIVITY REGULATION</scope>
</reference>
<reference key="27">
    <citation type="journal article" date="2012" name="Science">
        <title>Structure and allostery of the PKA RIIbeta tetrameric holoenzyme.</title>
        <authorList>
            <person name="Zhang P."/>
            <person name="Smith-Nguyen E.V."/>
            <person name="Keshwani M.M."/>
            <person name="Deal M.S."/>
            <person name="Kornev A.P."/>
            <person name="Taylor S.S."/>
        </authorList>
    </citation>
    <scope>X-RAY CRYSTALLOGRAPHY (2.3 ANGSTROMS) OF 2-351 IN COMPLEX WITH PRKAR2B</scope>
    <scope>SUBUNIT</scope>
    <scope>PHOSPHORYLATION AT SER-140 AND THR-198</scope>
</reference>
<keyword id="KW-0002">3D-structure</keyword>
<keyword id="KW-0025">Alternative splicing</keyword>
<keyword id="KW-0067">ATP-binding</keyword>
<keyword id="KW-0114">cAMP</keyword>
<keyword id="KW-1003">Cell membrane</keyword>
<keyword id="KW-0966">Cell projection</keyword>
<keyword id="KW-0969">Cilium</keyword>
<keyword id="KW-0963">Cytoplasm</keyword>
<keyword id="KW-0968">Cytoplasmic vesicle</keyword>
<keyword id="KW-0282">Flagellum</keyword>
<keyword id="KW-0418">Kinase</keyword>
<keyword id="KW-0449">Lipoprotein</keyword>
<keyword id="KW-0472">Membrane</keyword>
<keyword id="KW-0496">Mitochondrion</keyword>
<keyword id="KW-0519">Myristate</keyword>
<keyword id="KW-0547">Nucleotide-binding</keyword>
<keyword id="KW-0539">Nucleus</keyword>
<keyword id="KW-0597">Phosphoprotein</keyword>
<keyword id="KW-1185">Reference proteome</keyword>
<keyword id="KW-0723">Serine/threonine-protein kinase</keyword>
<keyword id="KW-0808">Transferase</keyword>
<sequence length="351" mass="40571">MGNAAAAKKGSEQESVKEFLAKAKEDFLKKWETPSQNTAQLDQFDRIKTLGTGSFGRVMLVKHKESGNHYAMKILDKQKVVKLKQIEHTLNEKRILQAVNFPFLVKLEFSFKDNSNLYMVMEYVAGGEMFSHLRRIGRFSEPHARFYAAQIVLTFEYLHSLDLIYRDLKPENLLIDQQGYIQVTDFGFAKRVKGRTWTLCGTPEYLAPEIILSKGYNKAVDWWALGVLIYEMAAGYPPFFADQPIQIYEKIVSGKVRFPSHFSSDLKDLLRNLLQVDLTKRFGNLKNGVNDIKNHKWFATTDWIAIYQRKVEAPFIPKFKGPGDTSNFDDYEEEEIRVSINEKCGKEFTEF</sequence>
<organism>
    <name type="scientific">Mus musculus</name>
    <name type="common">Mouse</name>
    <dbReference type="NCBI Taxonomy" id="10090"/>
    <lineage>
        <taxon>Eukaryota</taxon>
        <taxon>Metazoa</taxon>
        <taxon>Chordata</taxon>
        <taxon>Craniata</taxon>
        <taxon>Vertebrata</taxon>
        <taxon>Euteleostomi</taxon>
        <taxon>Mammalia</taxon>
        <taxon>Eutheria</taxon>
        <taxon>Euarchontoglires</taxon>
        <taxon>Glires</taxon>
        <taxon>Rodentia</taxon>
        <taxon>Myomorpha</taxon>
        <taxon>Muroidea</taxon>
        <taxon>Muridae</taxon>
        <taxon>Murinae</taxon>
        <taxon>Mus</taxon>
        <taxon>Mus</taxon>
    </lineage>
</organism>
<protein>
    <recommendedName>
        <fullName>cAMP-dependent protein kinase catalytic subunit alpha</fullName>
        <shortName>PKA C-alpha</shortName>
        <ecNumber evidence="6 13">2.7.11.11</ecNumber>
    </recommendedName>
</protein>
<comment type="function">
    <text evidence="2 3 6 13 19">Phosphorylates a large number of substrates in the cytoplasm and the nucleus (By similarity). Phosphorylates CDC25B, ABL1, NFKB1, CLDN3, PSMC5/RPT6, PJA2, RYR2, RORA, SOX9 and VASP (PubMed:10805756, PubMed:19223768). Regulates the abundance of compartmentalized pools of its regulatory subunits through phosphorylation of PJA2 which binds and ubiquitinates these subunits, leading to their subsequent proteolysis (By similarity). RORA is activated by phosphorylation. Required for glucose-mediated adipogenic differentiation increase and osteogenic differentiation inhibition from osteoblasts (By similarity). Involved in chondrogenesis by mediating phosphorylation of SOX9 (PubMed:10805756). Involved in the regulation of platelets in response to thrombin and collagen; maintains circulating platelets in a resting state by phosphorylating proteins in numerous platelet inhibitory pathways when in complex with NF-kappa-B (NFKB1 and NFKB2) and I-kappa-B-alpha (NFKBIA), but thrombin and collagen disrupt these complexes and free active PRKACA stimulates platelets and leads to platelet aggregation by phosphorylating VASP. RYR2 channel activity is potentiated by phosphorylation in presence of luminal Ca(2+), leading to reduced amplitude and increased frequency of store overload-induced Ca(2+) release (SOICR) characterized by an increased rate of Ca(2+) release and propagation velocity of spontaneous Ca(2+) waves, despite reduced wave amplitude and resting cytosolic Ca(2+). PSMC5/RPT6 activation by phosphorylation stimulates proteasome. Negatively regulates tight junctions (TJs) in ovarian cancer cells via CLDN3 phosphorylation. NFKB1 phosphorylation promotes NF-kappa-B p50-p50 DNA binding. Required for phosphorylation of GLI transcription factors which inhibits them and prevents transcriptional activation of Hedgehog signaling pathway target genes (PubMed:33886552). GLI transcription factor phosphorylation is inhibited by interaction of PRKACA with SMO which sequesters PRKACA at the cell membrane (PubMed:33886552). Involved in embryonic development by down-regulating the Hedgehog (Hh) signaling pathway that determines embryo pattern formation and morphogenesis most probably through the regulation of OFD1 in ciliogenesis (By similarity). Prevents meiosis resumption in prophase-arrested oocytes via CDC25B inactivation by phosphorylation (PubMed:19223768). May also regulate rapid eye movement (REM) sleep in the pedunculopontine tegmental (PPT) (By similarity). Phosphorylates APOBEC3G and AICDA. Phosphorylates HSF1; this phosphorylation promotes HSF1 nuclear localization and transcriptional activity upon heat shock (By similarity). Acts as a negative regulator of mTORC1 by mediating phosphorylation of RPTOR (By similarity).</text>
</comment>
<comment type="function">
    <molecule>Isoform 2</molecule>
    <text evidence="10 14">Phosphorylates and activates ABL1 in sperm flagellum to promote spermatozoa capacitation.</text>
</comment>
<comment type="catalytic activity">
    <reaction evidence="6 13">
        <text>L-seryl-[protein] + ATP = O-phospho-L-seryl-[protein] + ADP + H(+)</text>
        <dbReference type="Rhea" id="RHEA:17989"/>
        <dbReference type="Rhea" id="RHEA-COMP:9863"/>
        <dbReference type="Rhea" id="RHEA-COMP:11604"/>
        <dbReference type="ChEBI" id="CHEBI:15378"/>
        <dbReference type="ChEBI" id="CHEBI:29999"/>
        <dbReference type="ChEBI" id="CHEBI:30616"/>
        <dbReference type="ChEBI" id="CHEBI:83421"/>
        <dbReference type="ChEBI" id="CHEBI:456216"/>
        <dbReference type="EC" id="2.7.11.11"/>
    </reaction>
</comment>
<comment type="catalytic activity">
    <reaction evidence="6 13">
        <text>L-threonyl-[protein] + ATP = O-phospho-L-threonyl-[protein] + ADP + H(+)</text>
        <dbReference type="Rhea" id="RHEA:46608"/>
        <dbReference type="Rhea" id="RHEA-COMP:11060"/>
        <dbReference type="Rhea" id="RHEA-COMP:11605"/>
        <dbReference type="ChEBI" id="CHEBI:15378"/>
        <dbReference type="ChEBI" id="CHEBI:30013"/>
        <dbReference type="ChEBI" id="CHEBI:30616"/>
        <dbReference type="ChEBI" id="CHEBI:61977"/>
        <dbReference type="ChEBI" id="CHEBI:456216"/>
        <dbReference type="EC" id="2.7.11.11"/>
    </reaction>
</comment>
<comment type="activity regulation">
    <text evidence="15">Allosterically activated by various compounds, including ATP. Activated by cAMP; the nucleotide acts as a dynamic and allosteric activator by coupling the two lobes of apo PKA, enhancing the enzyme dynamics synchronously and priming it for catalysis.</text>
</comment>
<comment type="subunit">
    <text evidence="1 2 17 19">A number of inactive tetrameric holoenzymes are produced by the combination of homo- or heterodimers of the different regulatory subunits associated with two catalytic subunits. Protein kinase A holoenzyme is comprised of two catalytic (C) and two regulatory (R) subunits which keep the enzyme in an inhibited state before activation by cyclic-AMP. cAMP causes the dissociation of the inactive holoenzyme into a dimer of regulatory subunits bound to four cAMP and two free monomeric catalytic subunits. The cAMP-dependent protein kinase catalytic subunit binds PJA2. Both isoforms 1 and 2 forms activate cAMP-sensitive PKAI and PKAII holoenzymes by interacting with regulatory subunit (R) of PKA, PRKAR1A/PKR1 and PRKAR2A/PKR2, respectively. Interacts with PRKAR1A and PRKAR2B (By similarity). Interacts with NFKB1, NFKB2 and NFKBIA in platelets; these interactions are disrupted by thrombin and collagen. Binds to ABL1 in spermatozoa and with CDC25B in oocytes. Interacts with APOBEC3G and AICDA (By similarity). Interacts with RAB13; downstream effector of RAB13 involved in tight junction assembly (By similarity). Found in a complex at least composed of MROH2B isoform 2, PRKACA isoform 2 and TCP11 (PubMed:27105888). Interacts with MROH2B isoform 2 (PubMed:27105888). Interacts with HSF1 (By similarity). Isoform 2 interacts with TCP11 (PubMed:27105888). Interacts with TBC1D31; in the regulation of OFD1 (By similarity). Interacts in free form with SMO (via C-terminus); the interaction leads to sequestration of PRKACA at the membrane, preventing PRKACA-mediated phosphorylation of GLI transcription factors (PubMed:33886552).</text>
</comment>
<comment type="interaction">
    <interactant intactId="EBI-400564">
        <id>P05132</id>
    </interactant>
    <interactant intactId="EBI-2931786">
        <id>P63248</id>
        <label>Pkia</label>
    </interactant>
    <organismsDiffer>false</organismsDiffer>
    <experiments>4</experiments>
</comment>
<comment type="interaction">
    <interactant intactId="EBI-400564">
        <id>P05132</id>
    </interactant>
    <interactant intactId="EBI-10148373">
        <id>P61014</id>
        <label>Pln</label>
    </interactant>
    <organismsDiffer>false</organismsDiffer>
    <experiments>2</experiments>
</comment>
<comment type="interaction">
    <interactant intactId="EBI-400564">
        <id>P05132</id>
    </interactant>
    <interactant intactId="EBI-455340">
        <id>P31324</id>
        <label>Prkar2b</label>
    </interactant>
    <organismsDiffer>false</organismsDiffer>
    <experiments>15</experiments>
</comment>
<comment type="interaction">
    <interactant intactId="EBI-400564">
        <id>P05132</id>
    </interactant>
    <interactant intactId="EBI-20711">
        <id>P39717</id>
        <label>GPB2</label>
    </interactant>
    <organismsDiffer>true</organismsDiffer>
    <experiments>2</experiments>
</comment>
<comment type="interaction">
    <interactant intactId="EBI-400564">
        <id>P05132</id>
    </interactant>
    <interactant intactId="EBI-1041635">
        <id>P00514</id>
        <label>PRKAR1A</label>
    </interactant>
    <organismsDiffer>true</organismsDiffer>
    <experiments>6</experiments>
</comment>
<comment type="subcellular location">
    <subcellularLocation>
        <location evidence="11">Cytoplasm</location>
    </subcellularLocation>
    <subcellularLocation>
        <location evidence="19">Cell membrane</location>
    </subcellularLocation>
    <subcellularLocation>
        <location evidence="2">Nucleus</location>
    </subcellularLocation>
    <subcellularLocation>
        <location evidence="11">Mitochondrion</location>
    </subcellularLocation>
    <subcellularLocation>
        <location evidence="2">Membrane</location>
        <topology evidence="2">Lipid-anchor</topology>
    </subcellularLocation>
    <text evidence="2 19">Translocates into the nucleus (monomeric catalytic subunit) (By similarity). The inactive holoenzyme is found in the cytoplasm. Distributed throughout the cytoplasm in meiotically incompetent oocytes. Associated to mitochondrion as meiotic competence is acquired. Aggregates around the germinal vesicles (GV) at the immature GV stage oocytes. Colocalizes with HSF1 in nuclear stress bodies (nSBs) upon heat shock (By similarity). Recruited to the cell membrane through interaction with SMO (PubMed:33886552).</text>
</comment>
<comment type="subcellular location">
    <molecule>Isoform 2</molecule>
    <subcellularLocation>
        <location evidence="18">Cell projection</location>
        <location evidence="18">Cilium</location>
        <location evidence="18">Flagellum</location>
    </subcellularLocation>
    <subcellularLocation>
        <location evidence="18">Cytoplasmic vesicle</location>
        <location evidence="18">Secretory vesicle</location>
        <location evidence="18">Acrosome</location>
    </subcellularLocation>
    <text evidence="1 18">Expressed in the midpiece region of the sperm flagellum (By similarity). Colocalizes with MROH2B and TCP11 on the acrosome and tail regions in round spermatids and spermatozoa regardless of the capacitation status of the sperm (PubMed:27105888).</text>
</comment>
<comment type="alternative products">
    <event type="alternative splicing"/>
    <isoform>
        <id>P05132-1</id>
        <name>1</name>
        <name>C-alpha-1</name>
        <sequence type="displayed"/>
    </isoform>
    <isoform>
        <id>P05132-2</id>
        <name>2</name>
        <name>C-alpha-2</name>
        <name>C-alpha-S</name>
        <name>C(s)</name>
        <sequence type="described" ref="VSP_004760"/>
    </isoform>
</comment>
<comment type="tissue specificity">
    <molecule>Isoform 2</molecule>
    <text evidence="7">Sperm-specific.</text>
</comment>
<comment type="developmental stage">
    <text evidence="11">Accumulates in oocytes before fertilization but fades out after fertilization.</text>
</comment>
<comment type="PTM">
    <text evidence="2 16 20 21">Autophosphorylated; phosphorylation is enhanced by vitamin K(2) (By similarity). Phosphorylated on threonine and serine residues. Phosphorylation on Thr-198 is required for full activity (PubMed:8395513, PubMed:9707564). Phosphorylated at Tyr-331 by activated receptor tyrosine kinases EGFR and PDGFR; this increases catalytic efficiency (PubMed:21866565).</text>
</comment>
<comment type="PTM">
    <text evidence="8">Asn-3 is partially deaminated to Asp-3 giving rise to 2 major isoelectric variants, called CB and CA respectively.</text>
</comment>
<comment type="PTM">
    <text evidence="8 20">When myristoylated, Ser-11 is autophosphorylated probably in conjunction with deamidation of Asn-3.</text>
</comment>
<comment type="disruption phenotype">
    <text evidence="9">Frequent early postnatal lethality. Survivals are runted accompanied with mature sperm exhibiting defective forward motility.</text>
</comment>
<comment type="similarity">
    <text evidence="23">Belongs to the protein kinase superfamily. AGC Ser/Thr protein kinase family. cAMP subfamily.</text>
</comment>
<name>KAPCA_MOUSE</name>
<gene>
    <name type="primary">Prkaca</name>
    <name type="synonym">Pkaca</name>
</gene>
<proteinExistence type="evidence at protein level"/>
<evidence type="ECO:0000250" key="1"/>
<evidence type="ECO:0000250" key="2">
    <source>
        <dbReference type="UniProtKB" id="P17612"/>
    </source>
</evidence>
<evidence type="ECO:0000250" key="3">
    <source>
        <dbReference type="UniProtKB" id="P27791"/>
    </source>
</evidence>
<evidence type="ECO:0000255" key="4">
    <source>
        <dbReference type="PROSITE-ProRule" id="PRU00159"/>
    </source>
</evidence>
<evidence type="ECO:0000255" key="5">
    <source>
        <dbReference type="PROSITE-ProRule" id="PRU00618"/>
    </source>
</evidence>
<evidence type="ECO:0000269" key="6">
    <source>
    </source>
</evidence>
<evidence type="ECO:0000269" key="7">
    <source>
    </source>
</evidence>
<evidence type="ECO:0000269" key="8">
    <source>
    </source>
</evidence>
<evidence type="ECO:0000269" key="9">
    <source>
    </source>
</evidence>
<evidence type="ECO:0000269" key="10">
    <source>
    </source>
</evidence>
<evidence type="ECO:0000269" key="11">
    <source>
    </source>
</evidence>
<evidence type="ECO:0000269" key="12">
    <source>
    </source>
</evidence>
<evidence type="ECO:0000269" key="13">
    <source>
    </source>
</evidence>
<evidence type="ECO:0000269" key="14">
    <source>
    </source>
</evidence>
<evidence type="ECO:0000269" key="15">
    <source>
    </source>
</evidence>
<evidence type="ECO:0000269" key="16">
    <source>
    </source>
</evidence>
<evidence type="ECO:0000269" key="17">
    <source>
    </source>
</evidence>
<evidence type="ECO:0000269" key="18">
    <source>
    </source>
</evidence>
<evidence type="ECO:0000269" key="19">
    <source>
    </source>
</evidence>
<evidence type="ECO:0000269" key="20">
    <source>
    </source>
</evidence>
<evidence type="ECO:0000269" key="21">
    <source>
    </source>
</evidence>
<evidence type="ECO:0000303" key="22">
    <source>
    </source>
</evidence>
<evidence type="ECO:0000305" key="23"/>
<evidence type="ECO:0000305" key="24">
    <source>
    </source>
</evidence>
<evidence type="ECO:0007829" key="25">
    <source>
        <dbReference type="PDB" id="1BKX"/>
    </source>
</evidence>
<evidence type="ECO:0007829" key="26">
    <source>
        <dbReference type="PDB" id="1RDQ"/>
    </source>
</evidence>
<evidence type="ECO:0007829" key="27">
    <source>
        <dbReference type="PDB" id="1RE8"/>
    </source>
</evidence>
<evidence type="ECO:0007829" key="28">
    <source>
        <dbReference type="PDB" id="1REK"/>
    </source>
</evidence>
<evidence type="ECO:0007829" key="29">
    <source>
        <dbReference type="PDB" id="4DFX"/>
    </source>
</evidence>
<evidence type="ECO:0007829" key="30">
    <source>
        <dbReference type="PDB" id="4XW6"/>
    </source>
</evidence>
<evidence type="ECO:0007829" key="31">
    <source>
        <dbReference type="PDB" id="6MM6"/>
    </source>
</evidence>
<evidence type="ECO:0007829" key="32">
    <source>
        <dbReference type="PDB" id="7E11"/>
    </source>
</evidence>